<organism>
    <name type="scientific">Neisseria meningitidis serogroup C / serotype 2a (strain ATCC 700532 / DSM 15464 / FAM18)</name>
    <dbReference type="NCBI Taxonomy" id="272831"/>
    <lineage>
        <taxon>Bacteria</taxon>
        <taxon>Pseudomonadati</taxon>
        <taxon>Pseudomonadota</taxon>
        <taxon>Betaproteobacteria</taxon>
        <taxon>Neisseriales</taxon>
        <taxon>Neisseriaceae</taxon>
        <taxon>Neisseria</taxon>
    </lineage>
</organism>
<sequence length="296" mass="33199">MNPKSPLFLRLSDRLDVYLRLMRADKPIGTLLLLWPTYWALWLASDGIPDLAVLAAFTIGTFLMRSAGCVINDFADRDFDGAVERTKNRPFAQGRVKKKEALLLTAFLCLLAALCLIPLNHLTWLMSLPALFLALTYPFTKRFFPIPQLYLGLAFSFGIPMAFAAVGNSVPVEAWILFTANVLWTLAYDTVYAMADKEDDLKIGIKTSAVTFGRYDIAAVMLCHGGFTLLMAVLGAVIGAAWAYWTAIPIVLLLQYRQYAAIKSRVRQICFETFLANNRIGWVWFTAIFAHTFFAK</sequence>
<reference key="1">
    <citation type="journal article" date="2007" name="PLoS Genet.">
        <title>Meningococcal genetic variation mechanisms viewed through comparative analysis of serogroup C strain FAM18.</title>
        <authorList>
            <person name="Bentley S.D."/>
            <person name="Vernikos G.S."/>
            <person name="Snyder L.A.S."/>
            <person name="Churcher C."/>
            <person name="Arrowsmith C."/>
            <person name="Chillingworth T."/>
            <person name="Cronin A."/>
            <person name="Davis P.H."/>
            <person name="Holroyd N.E."/>
            <person name="Jagels K."/>
            <person name="Maddison M."/>
            <person name="Moule S."/>
            <person name="Rabbinowitsch E."/>
            <person name="Sharp S."/>
            <person name="Unwin L."/>
            <person name="Whitehead S."/>
            <person name="Quail M.A."/>
            <person name="Achtman M."/>
            <person name="Barrell B.G."/>
            <person name="Saunders N.J."/>
            <person name="Parkhill J."/>
        </authorList>
    </citation>
    <scope>NUCLEOTIDE SEQUENCE [LARGE SCALE GENOMIC DNA]</scope>
    <source>
        <strain>ATCC 700532 / DSM 15464 / FAM18</strain>
    </source>
</reference>
<name>UBIA_NEIMF</name>
<protein>
    <recommendedName>
        <fullName evidence="1">4-hydroxybenzoate octaprenyltransferase</fullName>
        <ecNumber evidence="1">2.5.1.39</ecNumber>
    </recommendedName>
    <alternativeName>
        <fullName evidence="1">4-HB polyprenyltransferase</fullName>
    </alternativeName>
</protein>
<dbReference type="EC" id="2.5.1.39" evidence="1"/>
<dbReference type="EMBL" id="AM421808">
    <property type="protein sequence ID" value="CAM09979.1"/>
    <property type="molecule type" value="Genomic_DNA"/>
</dbReference>
<dbReference type="RefSeq" id="WP_002217638.1">
    <property type="nucleotide sequence ID" value="NC_008767.1"/>
</dbReference>
<dbReference type="SMR" id="A1KSZ7"/>
<dbReference type="KEGG" id="nmc:NMC0688"/>
<dbReference type="HOGENOM" id="CLU_034879_1_0_4"/>
<dbReference type="UniPathway" id="UPA00232"/>
<dbReference type="Proteomes" id="UP000002286">
    <property type="component" value="Chromosome"/>
</dbReference>
<dbReference type="GO" id="GO:0005886">
    <property type="term" value="C:plasma membrane"/>
    <property type="evidence" value="ECO:0007669"/>
    <property type="project" value="UniProtKB-SubCell"/>
</dbReference>
<dbReference type="GO" id="GO:0008412">
    <property type="term" value="F:4-hydroxybenzoate polyprenyltransferase activity"/>
    <property type="evidence" value="ECO:0007669"/>
    <property type="project" value="UniProtKB-UniRule"/>
</dbReference>
<dbReference type="GO" id="GO:0006744">
    <property type="term" value="P:ubiquinone biosynthetic process"/>
    <property type="evidence" value="ECO:0007669"/>
    <property type="project" value="UniProtKB-UniRule"/>
</dbReference>
<dbReference type="CDD" id="cd13959">
    <property type="entry name" value="PT_UbiA_COQ2"/>
    <property type="match status" value="1"/>
</dbReference>
<dbReference type="FunFam" id="1.10.357.140:FF:000002">
    <property type="entry name" value="4-hydroxybenzoate octaprenyltransferase"/>
    <property type="match status" value="1"/>
</dbReference>
<dbReference type="FunFam" id="1.20.120.1780:FF:000001">
    <property type="entry name" value="4-hydroxybenzoate octaprenyltransferase"/>
    <property type="match status" value="1"/>
</dbReference>
<dbReference type="Gene3D" id="1.10.357.140">
    <property type="entry name" value="UbiA prenyltransferase"/>
    <property type="match status" value="1"/>
</dbReference>
<dbReference type="Gene3D" id="1.20.120.1780">
    <property type="entry name" value="UbiA prenyltransferase"/>
    <property type="match status" value="1"/>
</dbReference>
<dbReference type="HAMAP" id="MF_01635">
    <property type="entry name" value="UbiA"/>
    <property type="match status" value="1"/>
</dbReference>
<dbReference type="InterPro" id="IPR006370">
    <property type="entry name" value="HB_polyprenyltransferase-like"/>
</dbReference>
<dbReference type="InterPro" id="IPR039653">
    <property type="entry name" value="Prenyltransferase"/>
</dbReference>
<dbReference type="InterPro" id="IPR000537">
    <property type="entry name" value="UbiA_prenyltransferase"/>
</dbReference>
<dbReference type="InterPro" id="IPR030470">
    <property type="entry name" value="UbiA_prenylTrfase_CS"/>
</dbReference>
<dbReference type="InterPro" id="IPR044878">
    <property type="entry name" value="UbiA_sf"/>
</dbReference>
<dbReference type="NCBIfam" id="TIGR01474">
    <property type="entry name" value="ubiA_proteo"/>
    <property type="match status" value="1"/>
</dbReference>
<dbReference type="PANTHER" id="PTHR11048:SF28">
    <property type="entry name" value="4-HYDROXYBENZOATE POLYPRENYLTRANSFERASE, MITOCHONDRIAL"/>
    <property type="match status" value="1"/>
</dbReference>
<dbReference type="PANTHER" id="PTHR11048">
    <property type="entry name" value="PRENYLTRANSFERASES"/>
    <property type="match status" value="1"/>
</dbReference>
<dbReference type="Pfam" id="PF01040">
    <property type="entry name" value="UbiA"/>
    <property type="match status" value="1"/>
</dbReference>
<dbReference type="PROSITE" id="PS00943">
    <property type="entry name" value="UBIA"/>
    <property type="match status" value="1"/>
</dbReference>
<proteinExistence type="inferred from homology"/>
<evidence type="ECO:0000255" key="1">
    <source>
        <dbReference type="HAMAP-Rule" id="MF_01635"/>
    </source>
</evidence>
<accession>A1KSZ7</accession>
<comment type="function">
    <text evidence="1">Catalyzes the prenylation of para-hydroxybenzoate (PHB) with an all-trans polyprenyl group. Mediates the second step in the final reaction sequence of ubiquinone-8 (UQ-8) biosynthesis, which is the condensation of the polyisoprenoid side chain with PHB, generating the first membrane-bound Q intermediate 3-octaprenyl-4-hydroxybenzoate.</text>
</comment>
<comment type="catalytic activity">
    <reaction evidence="1">
        <text>all-trans-octaprenyl diphosphate + 4-hydroxybenzoate = 4-hydroxy-3-(all-trans-octaprenyl)benzoate + diphosphate</text>
        <dbReference type="Rhea" id="RHEA:27782"/>
        <dbReference type="ChEBI" id="CHEBI:1617"/>
        <dbReference type="ChEBI" id="CHEBI:17879"/>
        <dbReference type="ChEBI" id="CHEBI:33019"/>
        <dbReference type="ChEBI" id="CHEBI:57711"/>
        <dbReference type="EC" id="2.5.1.39"/>
    </reaction>
</comment>
<comment type="cofactor">
    <cofactor evidence="1">
        <name>Mg(2+)</name>
        <dbReference type="ChEBI" id="CHEBI:18420"/>
    </cofactor>
</comment>
<comment type="pathway">
    <text evidence="1">Cofactor biosynthesis; ubiquinone biosynthesis.</text>
</comment>
<comment type="subcellular location">
    <subcellularLocation>
        <location evidence="1">Cell inner membrane</location>
        <topology evidence="1">Multi-pass membrane protein</topology>
    </subcellularLocation>
</comment>
<comment type="similarity">
    <text evidence="1">Belongs to the UbiA prenyltransferase family.</text>
</comment>
<feature type="chain" id="PRO_1000069825" description="4-hydroxybenzoate octaprenyltransferase">
    <location>
        <begin position="1"/>
        <end position="296"/>
    </location>
</feature>
<feature type="transmembrane region" description="Helical" evidence="1">
    <location>
        <begin position="28"/>
        <end position="48"/>
    </location>
</feature>
<feature type="transmembrane region" description="Helical" evidence="1">
    <location>
        <begin position="51"/>
        <end position="71"/>
    </location>
</feature>
<feature type="transmembrane region" description="Helical" evidence="1">
    <location>
        <begin position="102"/>
        <end position="122"/>
    </location>
</feature>
<feature type="transmembrane region" description="Helical" evidence="1">
    <location>
        <begin position="143"/>
        <end position="163"/>
    </location>
</feature>
<feature type="transmembrane region" description="Helical" evidence="1">
    <location>
        <begin position="174"/>
        <end position="194"/>
    </location>
</feature>
<feature type="transmembrane region" description="Helical" evidence="1">
    <location>
        <begin position="212"/>
        <end position="232"/>
    </location>
</feature>
<feature type="transmembrane region" description="Helical" evidence="1">
    <location>
        <begin position="233"/>
        <end position="253"/>
    </location>
</feature>
<feature type="transmembrane region" description="Helical" evidence="1">
    <location>
        <begin position="274"/>
        <end position="294"/>
    </location>
</feature>
<keyword id="KW-0997">Cell inner membrane</keyword>
<keyword id="KW-1003">Cell membrane</keyword>
<keyword id="KW-0460">Magnesium</keyword>
<keyword id="KW-0472">Membrane</keyword>
<keyword id="KW-0808">Transferase</keyword>
<keyword id="KW-0812">Transmembrane</keyword>
<keyword id="KW-1133">Transmembrane helix</keyword>
<keyword id="KW-0831">Ubiquinone biosynthesis</keyword>
<gene>
    <name evidence="1" type="primary">ubiA</name>
    <name type="ordered locus">NMC0688</name>
</gene>